<protein>
    <recommendedName>
        <fullName evidence="1">Oxygen-dependent coproporphyrinogen-III oxidase</fullName>
        <shortName evidence="1">CPO</shortName>
        <shortName evidence="1">Coprogen oxidase</shortName>
        <shortName evidence="1">Coproporphyrinogenase</shortName>
        <ecNumber evidence="1">1.3.3.3</ecNumber>
    </recommendedName>
</protein>
<reference key="1">
    <citation type="submission" date="2009-07" db="EMBL/GenBank/DDBJ databases">
        <title>Complete sequence of Pectobacterium carotovorum subsp. carotovorum PC1.</title>
        <authorList>
            <consortium name="US DOE Joint Genome Institute"/>
            <person name="Lucas S."/>
            <person name="Copeland A."/>
            <person name="Lapidus A."/>
            <person name="Glavina del Rio T."/>
            <person name="Tice H."/>
            <person name="Bruce D."/>
            <person name="Goodwin L."/>
            <person name="Pitluck S."/>
            <person name="Munk A.C."/>
            <person name="Brettin T."/>
            <person name="Detter J.C."/>
            <person name="Han C."/>
            <person name="Tapia R."/>
            <person name="Larimer F."/>
            <person name="Land M."/>
            <person name="Hauser L."/>
            <person name="Kyrpides N."/>
            <person name="Mikhailova N."/>
            <person name="Balakrishnan V."/>
            <person name="Glasner J."/>
            <person name="Perna N.T."/>
        </authorList>
    </citation>
    <scope>NUCLEOTIDE SEQUENCE [LARGE SCALE GENOMIC DNA]</scope>
    <source>
        <strain>PC1</strain>
    </source>
</reference>
<organism>
    <name type="scientific">Pectobacterium carotovorum subsp. carotovorum (strain PC1)</name>
    <dbReference type="NCBI Taxonomy" id="561230"/>
    <lineage>
        <taxon>Bacteria</taxon>
        <taxon>Pseudomonadati</taxon>
        <taxon>Pseudomonadota</taxon>
        <taxon>Gammaproteobacteria</taxon>
        <taxon>Enterobacterales</taxon>
        <taxon>Pectobacteriaceae</taxon>
        <taxon>Pectobacterium</taxon>
    </lineage>
</organism>
<evidence type="ECO:0000255" key="1">
    <source>
        <dbReference type="HAMAP-Rule" id="MF_00333"/>
    </source>
</evidence>
<name>HEM6_PECCP</name>
<sequence length="310" mass="35231">MSDVNAVKHFLLSLQKDICQQLAAIDGGADFAEDEWQRAEGGGGCSRVLSGGRVFERAGVNFSHVTGKSLPPSASTHRPDLAGRSFQAMGVSLVIHPLSPYIPTSHANVRLFIAEKPGEEPVWWFGGGFDLTPYYGFKEDAVHWHQTAHDLCQPFGDEVYPRYKKWCDDYFFLKHRNEARGIGGLFFDDLNEPDFATSFAFIRAVGNGFLDGYLPIVERRKDLPWGEREREFQLYRRGRYVEFNLIWDRGTLFGLQSGGRTESILMSMPPLARWEYQHQPEPGSPEALLYQDFLPARDWLAESHTHNKEA</sequence>
<comment type="function">
    <text evidence="1">Involved in the heme biosynthesis. Catalyzes the aerobic oxidative decarboxylation of propionate groups of rings A and B of coproporphyrinogen-III to yield the vinyl groups in protoporphyrinogen-IX.</text>
</comment>
<comment type="catalytic activity">
    <reaction evidence="1">
        <text>coproporphyrinogen III + O2 + 2 H(+) = protoporphyrinogen IX + 2 CO2 + 2 H2O</text>
        <dbReference type="Rhea" id="RHEA:18257"/>
        <dbReference type="ChEBI" id="CHEBI:15377"/>
        <dbReference type="ChEBI" id="CHEBI:15378"/>
        <dbReference type="ChEBI" id="CHEBI:15379"/>
        <dbReference type="ChEBI" id="CHEBI:16526"/>
        <dbReference type="ChEBI" id="CHEBI:57307"/>
        <dbReference type="ChEBI" id="CHEBI:57309"/>
        <dbReference type="EC" id="1.3.3.3"/>
    </reaction>
</comment>
<comment type="cofactor">
    <cofactor evidence="1">
        <name>a divalent metal cation</name>
        <dbReference type="ChEBI" id="CHEBI:60240"/>
    </cofactor>
</comment>
<comment type="pathway">
    <text evidence="1">Porphyrin-containing compound metabolism; protoporphyrin-IX biosynthesis; protoporphyrinogen-IX from coproporphyrinogen-III (O2 route): step 1/1.</text>
</comment>
<comment type="subunit">
    <text evidence="1">Homodimer.</text>
</comment>
<comment type="subcellular location">
    <subcellularLocation>
        <location evidence="1">Cytoplasm</location>
    </subcellularLocation>
</comment>
<comment type="similarity">
    <text evidence="1">Belongs to the aerobic coproporphyrinogen-III oxidase family.</text>
</comment>
<gene>
    <name evidence="1" type="primary">hemF</name>
    <name type="ordered locus">PC1_0757</name>
</gene>
<keyword id="KW-0963">Cytoplasm</keyword>
<keyword id="KW-0350">Heme biosynthesis</keyword>
<keyword id="KW-0479">Metal-binding</keyword>
<keyword id="KW-0560">Oxidoreductase</keyword>
<keyword id="KW-0627">Porphyrin biosynthesis</keyword>
<proteinExistence type="inferred from homology"/>
<feature type="chain" id="PRO_1000205203" description="Oxygen-dependent coproporphyrinogen-III oxidase">
    <location>
        <begin position="1"/>
        <end position="310"/>
    </location>
</feature>
<feature type="region of interest" description="Important for dimerization" evidence="1">
    <location>
        <begin position="240"/>
        <end position="275"/>
    </location>
</feature>
<feature type="active site" description="Proton donor" evidence="1">
    <location>
        <position position="106"/>
    </location>
</feature>
<feature type="binding site" evidence="1">
    <location>
        <position position="92"/>
    </location>
    <ligand>
        <name>substrate</name>
    </ligand>
</feature>
<feature type="binding site" evidence="1">
    <location>
        <position position="96"/>
    </location>
    <ligand>
        <name>a divalent metal cation</name>
        <dbReference type="ChEBI" id="CHEBI:60240"/>
    </ligand>
</feature>
<feature type="binding site" evidence="1">
    <location>
        <position position="106"/>
    </location>
    <ligand>
        <name>a divalent metal cation</name>
        <dbReference type="ChEBI" id="CHEBI:60240"/>
    </ligand>
</feature>
<feature type="binding site" evidence="1">
    <location>
        <begin position="108"/>
        <end position="110"/>
    </location>
    <ligand>
        <name>substrate</name>
    </ligand>
</feature>
<feature type="binding site" evidence="1">
    <location>
        <position position="145"/>
    </location>
    <ligand>
        <name>a divalent metal cation</name>
        <dbReference type="ChEBI" id="CHEBI:60240"/>
    </ligand>
</feature>
<feature type="binding site" evidence="1">
    <location>
        <position position="175"/>
    </location>
    <ligand>
        <name>a divalent metal cation</name>
        <dbReference type="ChEBI" id="CHEBI:60240"/>
    </ligand>
</feature>
<feature type="binding site" evidence="1">
    <location>
        <begin position="258"/>
        <end position="260"/>
    </location>
    <ligand>
        <name>substrate</name>
    </ligand>
</feature>
<feature type="site" description="Important for dimerization" evidence="1">
    <location>
        <position position="175"/>
    </location>
</feature>
<dbReference type="EC" id="1.3.3.3" evidence="1"/>
<dbReference type="EMBL" id="CP001657">
    <property type="protein sequence ID" value="ACT11811.1"/>
    <property type="molecule type" value="Genomic_DNA"/>
</dbReference>
<dbReference type="SMR" id="C6D9M5"/>
<dbReference type="STRING" id="561230.PC1_0757"/>
<dbReference type="KEGG" id="pct:PC1_0757"/>
<dbReference type="eggNOG" id="COG0408">
    <property type="taxonomic scope" value="Bacteria"/>
</dbReference>
<dbReference type="HOGENOM" id="CLU_026169_0_1_6"/>
<dbReference type="OrthoDB" id="9777553at2"/>
<dbReference type="UniPathway" id="UPA00251">
    <property type="reaction ID" value="UER00322"/>
</dbReference>
<dbReference type="Proteomes" id="UP000002736">
    <property type="component" value="Chromosome"/>
</dbReference>
<dbReference type="GO" id="GO:0005737">
    <property type="term" value="C:cytoplasm"/>
    <property type="evidence" value="ECO:0007669"/>
    <property type="project" value="UniProtKB-SubCell"/>
</dbReference>
<dbReference type="GO" id="GO:0004109">
    <property type="term" value="F:coproporphyrinogen oxidase activity"/>
    <property type="evidence" value="ECO:0007669"/>
    <property type="project" value="UniProtKB-UniRule"/>
</dbReference>
<dbReference type="GO" id="GO:0046872">
    <property type="term" value="F:metal ion binding"/>
    <property type="evidence" value="ECO:0007669"/>
    <property type="project" value="UniProtKB-KW"/>
</dbReference>
<dbReference type="GO" id="GO:0042803">
    <property type="term" value="F:protein homodimerization activity"/>
    <property type="evidence" value="ECO:0000250"/>
    <property type="project" value="UniProtKB"/>
</dbReference>
<dbReference type="GO" id="GO:0006782">
    <property type="term" value="P:protoporphyrinogen IX biosynthetic process"/>
    <property type="evidence" value="ECO:0007669"/>
    <property type="project" value="UniProtKB-UniRule"/>
</dbReference>
<dbReference type="FunFam" id="3.40.1500.10:FF:000001">
    <property type="entry name" value="Oxygen-dependent coproporphyrinogen-III oxidase"/>
    <property type="match status" value="1"/>
</dbReference>
<dbReference type="Gene3D" id="3.40.1500.10">
    <property type="entry name" value="Coproporphyrinogen III oxidase, aerobic"/>
    <property type="match status" value="1"/>
</dbReference>
<dbReference type="HAMAP" id="MF_00333">
    <property type="entry name" value="Coprogen_oxidas"/>
    <property type="match status" value="1"/>
</dbReference>
<dbReference type="InterPro" id="IPR001260">
    <property type="entry name" value="Coprogen_oxidase_aer"/>
</dbReference>
<dbReference type="InterPro" id="IPR036406">
    <property type="entry name" value="Coprogen_oxidase_aer_sf"/>
</dbReference>
<dbReference type="InterPro" id="IPR018375">
    <property type="entry name" value="Coprogen_oxidase_CS"/>
</dbReference>
<dbReference type="NCBIfam" id="NF003727">
    <property type="entry name" value="PRK05330.1"/>
    <property type="match status" value="1"/>
</dbReference>
<dbReference type="PANTHER" id="PTHR10755">
    <property type="entry name" value="COPROPORPHYRINOGEN III OXIDASE, MITOCHONDRIAL"/>
    <property type="match status" value="1"/>
</dbReference>
<dbReference type="PANTHER" id="PTHR10755:SF0">
    <property type="entry name" value="OXYGEN-DEPENDENT COPROPORPHYRINOGEN-III OXIDASE, MITOCHONDRIAL"/>
    <property type="match status" value="1"/>
</dbReference>
<dbReference type="Pfam" id="PF01218">
    <property type="entry name" value="Coprogen_oxidas"/>
    <property type="match status" value="1"/>
</dbReference>
<dbReference type="PIRSF" id="PIRSF000166">
    <property type="entry name" value="Coproporphyri_ox"/>
    <property type="match status" value="1"/>
</dbReference>
<dbReference type="PRINTS" id="PR00073">
    <property type="entry name" value="COPRGNOXDASE"/>
</dbReference>
<dbReference type="SUPFAM" id="SSF102886">
    <property type="entry name" value="Coproporphyrinogen III oxidase"/>
    <property type="match status" value="1"/>
</dbReference>
<dbReference type="PROSITE" id="PS01021">
    <property type="entry name" value="COPROGEN_OXIDASE"/>
    <property type="match status" value="1"/>
</dbReference>
<accession>C6D9M5</accession>